<keyword id="KW-0963">Cytoplasm</keyword>
<keyword id="KW-0223">Dioxygenase</keyword>
<keyword id="KW-0408">Iron</keyword>
<keyword id="KW-0479">Metal-binding</keyword>
<keyword id="KW-0539">Nucleus</keyword>
<keyword id="KW-0560">Oxidoreductase</keyword>
<keyword id="KW-1185">Reference proteome</keyword>
<accession>Q8K2U2</accession>
<accession>G3X994</accession>
<sequence length="238" mass="26776">MEEQDARVPALEPFRVEQAPPLIYYVPDFISKEEEEYLLRQVFNAPKPKWTQLSGRKLQNWGGLPHPRGMVPERLPPWLQRYVDKVSDLSLFGGLPANHVLVNQYLPGEGIMPHEDGPLYYPTVSTISLGSHTVLDFYEPRQPDDDVPMEQPRPPQRPITSLLVEPRSLLVLRGTAYTRLLHGISATRVDELDATSLPPNATACKSALPGAHLVRGTRVSLTIRRVPRVLRASLLLSK</sequence>
<proteinExistence type="evidence at transcript level"/>
<protein>
    <recommendedName>
        <fullName>Probable RNA/DNA demethylase ALKBH6</fullName>
        <ecNumber evidence="2">1.14.11.-</ecNumber>
    </recommendedName>
    <alternativeName>
        <fullName>Alkylated DNA repair protein alkB homolog 6</fullName>
    </alternativeName>
    <alternativeName>
        <fullName>Alpha-ketoglutarate-dependent dioxygenase alkB homolog 6</fullName>
    </alternativeName>
</protein>
<reference key="1">
    <citation type="journal article" date="2009" name="PLoS Biol.">
        <title>Lineage-specific biology revealed by a finished genome assembly of the mouse.</title>
        <authorList>
            <person name="Church D.M."/>
            <person name="Goodstadt L."/>
            <person name="Hillier L.W."/>
            <person name="Zody M.C."/>
            <person name="Goldstein S."/>
            <person name="She X."/>
            <person name="Bult C.J."/>
            <person name="Agarwala R."/>
            <person name="Cherry J.L."/>
            <person name="DiCuccio M."/>
            <person name="Hlavina W."/>
            <person name="Kapustin Y."/>
            <person name="Meric P."/>
            <person name="Maglott D."/>
            <person name="Birtle Z."/>
            <person name="Marques A.C."/>
            <person name="Graves T."/>
            <person name="Zhou S."/>
            <person name="Teague B."/>
            <person name="Potamousis K."/>
            <person name="Churas C."/>
            <person name="Place M."/>
            <person name="Herschleb J."/>
            <person name="Runnheim R."/>
            <person name="Forrest D."/>
            <person name="Amos-Landgraf J."/>
            <person name="Schwartz D.C."/>
            <person name="Cheng Z."/>
            <person name="Lindblad-Toh K."/>
            <person name="Eichler E.E."/>
            <person name="Ponting C.P."/>
        </authorList>
    </citation>
    <scope>NUCLEOTIDE SEQUENCE [LARGE SCALE GENOMIC DNA]</scope>
    <source>
        <strain>C57BL/6J</strain>
    </source>
</reference>
<reference key="2">
    <citation type="submission" date="2005-07" db="EMBL/GenBank/DDBJ databases">
        <authorList>
            <person name="Mural R.J."/>
            <person name="Adams M.D."/>
            <person name="Myers E.W."/>
            <person name="Smith H.O."/>
            <person name="Venter J.C."/>
        </authorList>
    </citation>
    <scope>NUCLEOTIDE SEQUENCE [LARGE SCALE GENOMIC DNA]</scope>
</reference>
<reference key="3">
    <citation type="journal article" date="2004" name="Genome Res.">
        <title>The status, quality, and expansion of the NIH full-length cDNA project: the Mammalian Gene Collection (MGC).</title>
        <authorList>
            <consortium name="The MGC Project Team"/>
        </authorList>
    </citation>
    <scope>NUCLEOTIDE SEQUENCE [LARGE SCALE MRNA]</scope>
    <source>
        <strain>FVB/N</strain>
        <tissue>Mammary tumor</tissue>
    </source>
</reference>
<feature type="chain" id="PRO_0000323717" description="Probable RNA/DNA demethylase ALKBH6">
    <location>
        <begin position="1"/>
        <end position="238"/>
    </location>
</feature>
<feature type="domain" description="Fe2OG dioxygenase" evidence="3">
    <location>
        <begin position="96"/>
        <end position="227"/>
    </location>
</feature>
<feature type="binding site" evidence="2">
    <location>
        <position position="103"/>
    </location>
    <ligand>
        <name>2-oxoglutarate</name>
        <dbReference type="ChEBI" id="CHEBI:16810"/>
    </ligand>
</feature>
<feature type="binding site" evidence="2">
    <location>
        <position position="105"/>
    </location>
    <ligand>
        <name>2-oxoglutarate</name>
        <dbReference type="ChEBI" id="CHEBI:16810"/>
    </ligand>
</feature>
<feature type="binding site" evidence="3">
    <location>
        <position position="114"/>
    </location>
    <ligand>
        <name>Fe cation</name>
        <dbReference type="ChEBI" id="CHEBI:24875"/>
        <note>catalytic</note>
    </ligand>
</feature>
<feature type="binding site" evidence="3">
    <location>
        <position position="116"/>
    </location>
    <ligand>
        <name>Fe cation</name>
        <dbReference type="ChEBI" id="CHEBI:24875"/>
        <note>catalytic</note>
    </ligand>
</feature>
<feature type="binding site" evidence="3">
    <location>
        <position position="182"/>
    </location>
    <ligand>
        <name>Fe cation</name>
        <dbReference type="ChEBI" id="CHEBI:24875"/>
        <note>catalytic</note>
    </ligand>
</feature>
<feature type="binding site" evidence="2">
    <location>
        <position position="218"/>
    </location>
    <ligand>
        <name>2-oxoglutarate</name>
        <dbReference type="ChEBI" id="CHEBI:16810"/>
    </ligand>
</feature>
<feature type="binding site" evidence="2">
    <location>
        <position position="220"/>
    </location>
    <ligand>
        <name>2-oxoglutarate</name>
        <dbReference type="ChEBI" id="CHEBI:16810"/>
    </ligand>
</feature>
<evidence type="ECO:0000250" key="1"/>
<evidence type="ECO:0000250" key="2">
    <source>
        <dbReference type="UniProtKB" id="Q3KRA9"/>
    </source>
</evidence>
<evidence type="ECO:0000255" key="3">
    <source>
        <dbReference type="PROSITE-ProRule" id="PRU00805"/>
    </source>
</evidence>
<evidence type="ECO:0000305" key="4"/>
<gene>
    <name type="primary">Alkbh6</name>
</gene>
<name>ALKB6_MOUSE</name>
<dbReference type="EC" id="1.14.11.-" evidence="2"/>
<dbReference type="EMBL" id="AC149067">
    <property type="status" value="NOT_ANNOTATED_CDS"/>
    <property type="molecule type" value="Genomic_DNA"/>
</dbReference>
<dbReference type="EMBL" id="CH466593">
    <property type="protein sequence ID" value="EDL24033.1"/>
    <property type="molecule type" value="Genomic_DNA"/>
</dbReference>
<dbReference type="EMBL" id="BC029805">
    <property type="protein sequence ID" value="AAH29805.1"/>
    <property type="status" value="ALT_FRAME"/>
    <property type="molecule type" value="mRNA"/>
</dbReference>
<dbReference type="CCDS" id="CCDS21085.1"/>
<dbReference type="RefSeq" id="NP_932144.2">
    <property type="nucleotide sequence ID" value="NM_198027.2"/>
</dbReference>
<dbReference type="SMR" id="Q8K2U2"/>
<dbReference type="FunCoup" id="Q8K2U2">
    <property type="interactions" value="1009"/>
</dbReference>
<dbReference type="STRING" id="10090.ENSMUSP00000051515"/>
<dbReference type="iPTMnet" id="Q8K2U2"/>
<dbReference type="PhosphoSitePlus" id="Q8K2U2"/>
<dbReference type="PaxDb" id="10090-ENSMUSP00000051515"/>
<dbReference type="ProteomicsDB" id="296195"/>
<dbReference type="Pumba" id="Q8K2U2"/>
<dbReference type="Antibodypedia" id="68413">
    <property type="antibodies" value="75 antibodies from 16 providers"/>
</dbReference>
<dbReference type="Ensembl" id="ENSMUST00000060834.12">
    <property type="protein sequence ID" value="ENSMUSP00000051515.6"/>
    <property type="gene ID" value="ENSMUSG00000042831.14"/>
</dbReference>
<dbReference type="GeneID" id="233065"/>
<dbReference type="KEGG" id="mmu:233065"/>
<dbReference type="UCSC" id="uc009geb.1">
    <property type="organism name" value="mouse"/>
</dbReference>
<dbReference type="AGR" id="MGI:2142037"/>
<dbReference type="CTD" id="84964"/>
<dbReference type="MGI" id="MGI:2142037">
    <property type="gene designation" value="Alkbh6"/>
</dbReference>
<dbReference type="VEuPathDB" id="HostDB:ENSMUSG00000042831"/>
<dbReference type="eggNOG" id="KOG3200">
    <property type="taxonomic scope" value="Eukaryota"/>
</dbReference>
<dbReference type="GeneTree" id="ENSGT00510000048626"/>
<dbReference type="InParanoid" id="Q8K2U2"/>
<dbReference type="OMA" id="KSPKTKW"/>
<dbReference type="OrthoDB" id="412814at2759"/>
<dbReference type="PhylomeDB" id="Q8K2U2"/>
<dbReference type="TreeFam" id="TF314467"/>
<dbReference type="BioGRID-ORCS" id="233065">
    <property type="hits" value="1 hit in 79 CRISPR screens"/>
</dbReference>
<dbReference type="ChiTaRS" id="Alkbh6">
    <property type="organism name" value="mouse"/>
</dbReference>
<dbReference type="PRO" id="PR:Q8K2U2"/>
<dbReference type="Proteomes" id="UP000000589">
    <property type="component" value="Chromosome 7"/>
</dbReference>
<dbReference type="RNAct" id="Q8K2U2">
    <property type="molecule type" value="protein"/>
</dbReference>
<dbReference type="Bgee" id="ENSMUSG00000042831">
    <property type="expression patterns" value="Expressed in adrenal gland and 63 other cell types or tissues"/>
</dbReference>
<dbReference type="ExpressionAtlas" id="Q8K2U2">
    <property type="expression patterns" value="baseline and differential"/>
</dbReference>
<dbReference type="GO" id="GO:0005737">
    <property type="term" value="C:cytoplasm"/>
    <property type="evidence" value="ECO:0007669"/>
    <property type="project" value="UniProtKB-SubCell"/>
</dbReference>
<dbReference type="GO" id="GO:0005925">
    <property type="term" value="C:focal adhesion"/>
    <property type="evidence" value="ECO:0007669"/>
    <property type="project" value="Ensembl"/>
</dbReference>
<dbReference type="GO" id="GO:0005654">
    <property type="term" value="C:nucleoplasm"/>
    <property type="evidence" value="ECO:0007669"/>
    <property type="project" value="Ensembl"/>
</dbReference>
<dbReference type="GO" id="GO:0051213">
    <property type="term" value="F:dioxygenase activity"/>
    <property type="evidence" value="ECO:0007669"/>
    <property type="project" value="UniProtKB-KW"/>
</dbReference>
<dbReference type="GO" id="GO:0046872">
    <property type="term" value="F:metal ion binding"/>
    <property type="evidence" value="ECO:0007669"/>
    <property type="project" value="UniProtKB-KW"/>
</dbReference>
<dbReference type="FunFam" id="2.60.120.590:FF:000007">
    <property type="entry name" value="Alpha-ketoglutarate-dependent dioxygenase alkB homolog 6"/>
    <property type="match status" value="1"/>
</dbReference>
<dbReference type="Gene3D" id="2.60.120.590">
    <property type="entry name" value="Alpha-ketoglutarate-dependent dioxygenase AlkB-like"/>
    <property type="match status" value="1"/>
</dbReference>
<dbReference type="InterPro" id="IPR027450">
    <property type="entry name" value="AlkB-like"/>
</dbReference>
<dbReference type="InterPro" id="IPR037151">
    <property type="entry name" value="AlkB-like_sf"/>
</dbReference>
<dbReference type="InterPro" id="IPR032862">
    <property type="entry name" value="ALKBH6"/>
</dbReference>
<dbReference type="InterPro" id="IPR005123">
    <property type="entry name" value="Oxoglu/Fe-dep_dioxygenase_dom"/>
</dbReference>
<dbReference type="PANTHER" id="PTHR46030">
    <property type="entry name" value="ALPHA-KETOGLUTARATE-DEPENDENT DIOXYGENASE ALKB HOMOLOG 6"/>
    <property type="match status" value="1"/>
</dbReference>
<dbReference type="PANTHER" id="PTHR46030:SF1">
    <property type="entry name" value="ALPHA-KETOGLUTARATE-DEPENDENT DIOXYGENASE ALKB HOMOLOG 6"/>
    <property type="match status" value="1"/>
</dbReference>
<dbReference type="Pfam" id="PF13532">
    <property type="entry name" value="2OG-FeII_Oxy_2"/>
    <property type="match status" value="1"/>
</dbReference>
<dbReference type="SUPFAM" id="SSF51197">
    <property type="entry name" value="Clavaminate synthase-like"/>
    <property type="match status" value="1"/>
</dbReference>
<dbReference type="PROSITE" id="PS51471">
    <property type="entry name" value="FE2OG_OXY"/>
    <property type="match status" value="1"/>
</dbReference>
<organism>
    <name type="scientific">Mus musculus</name>
    <name type="common">Mouse</name>
    <dbReference type="NCBI Taxonomy" id="10090"/>
    <lineage>
        <taxon>Eukaryota</taxon>
        <taxon>Metazoa</taxon>
        <taxon>Chordata</taxon>
        <taxon>Craniata</taxon>
        <taxon>Vertebrata</taxon>
        <taxon>Euteleostomi</taxon>
        <taxon>Mammalia</taxon>
        <taxon>Eutheria</taxon>
        <taxon>Euarchontoglires</taxon>
        <taxon>Glires</taxon>
        <taxon>Rodentia</taxon>
        <taxon>Myomorpha</taxon>
        <taxon>Muroidea</taxon>
        <taxon>Muridae</taxon>
        <taxon>Murinae</taxon>
        <taxon>Mus</taxon>
        <taxon>Mus</taxon>
    </lineage>
</organism>
<comment type="function">
    <text evidence="2">Probable Fe(2+)/2-oxoglutarate-dependent dioxygenase involved in oxidative demethylation of nucleic acids. Binds nucleic acids with a preference for ssDNA or ssRNA to other types of DNAs. May play a role in nucleic acid damage repair.</text>
</comment>
<comment type="cofactor">
    <cofactor evidence="3">
        <name>Fe(2+)</name>
        <dbReference type="ChEBI" id="CHEBI:29033"/>
    </cofactor>
    <text evidence="3">Binds 1 Fe(2+) ion per subunit.</text>
</comment>
<comment type="subunit">
    <text evidence="1">Interacts with VCPKMT.</text>
</comment>
<comment type="subcellular location">
    <subcellularLocation>
        <location evidence="2">Cytoplasm</location>
    </subcellularLocation>
    <subcellularLocation>
        <location evidence="2">Nucleus</location>
    </subcellularLocation>
</comment>
<comment type="similarity">
    <text evidence="4">Belongs to the alkB family.</text>
</comment>
<comment type="sequence caution" evidence="4">
    <conflict type="frameshift">
        <sequence resource="EMBL-CDS" id="AAH29805"/>
    </conflict>
</comment>